<proteinExistence type="inferred from homology"/>
<sequence>MAKVQYFGTGRRKKSVARVILVPGDGKVTINKRDIEVYFGLETLRYIVNQPLVLTGTKDKFDVIVNVNGGGFTGQAGAIRHGITRALVKADETLKPELKKAGFLTRDPRMKERKKYGLKKARRAPQFSKR</sequence>
<accession>A0PXY2</accession>
<evidence type="ECO:0000255" key="1">
    <source>
        <dbReference type="HAMAP-Rule" id="MF_00532"/>
    </source>
</evidence>
<evidence type="ECO:0000256" key="2">
    <source>
        <dbReference type="SAM" id="MobiDB-lite"/>
    </source>
</evidence>
<evidence type="ECO:0000305" key="3"/>
<keyword id="KW-1185">Reference proteome</keyword>
<keyword id="KW-0687">Ribonucleoprotein</keyword>
<keyword id="KW-0689">Ribosomal protein</keyword>
<reference key="1">
    <citation type="journal article" date="2006" name="Nat. Biotechnol.">
        <title>The genome and transcriptomes of the anti-tumor agent Clostridium novyi-NT.</title>
        <authorList>
            <person name="Bettegowda C."/>
            <person name="Huang X."/>
            <person name="Lin J."/>
            <person name="Cheong I."/>
            <person name="Kohli M."/>
            <person name="Szabo S.A."/>
            <person name="Zhang X."/>
            <person name="Diaz L.A. Jr."/>
            <person name="Velculescu V.E."/>
            <person name="Parmigiani G."/>
            <person name="Kinzler K.W."/>
            <person name="Vogelstein B."/>
            <person name="Zhou S."/>
        </authorList>
    </citation>
    <scope>NUCLEOTIDE SEQUENCE [LARGE SCALE GENOMIC DNA]</scope>
    <source>
        <strain>NT</strain>
    </source>
</reference>
<dbReference type="EMBL" id="CP000382">
    <property type="protein sequence ID" value="ABK61992.1"/>
    <property type="molecule type" value="Genomic_DNA"/>
</dbReference>
<dbReference type="RefSeq" id="WP_011721242.1">
    <property type="nucleotide sequence ID" value="NC_008593.1"/>
</dbReference>
<dbReference type="SMR" id="A0PXY2"/>
<dbReference type="STRING" id="386415.NT01CX_1151"/>
<dbReference type="KEGG" id="cno:NT01CX_1151"/>
<dbReference type="eggNOG" id="COG0103">
    <property type="taxonomic scope" value="Bacteria"/>
</dbReference>
<dbReference type="HOGENOM" id="CLU_046483_2_1_9"/>
<dbReference type="Proteomes" id="UP000008220">
    <property type="component" value="Chromosome"/>
</dbReference>
<dbReference type="GO" id="GO:0022627">
    <property type="term" value="C:cytosolic small ribosomal subunit"/>
    <property type="evidence" value="ECO:0007669"/>
    <property type="project" value="TreeGrafter"/>
</dbReference>
<dbReference type="GO" id="GO:0003723">
    <property type="term" value="F:RNA binding"/>
    <property type="evidence" value="ECO:0007669"/>
    <property type="project" value="TreeGrafter"/>
</dbReference>
<dbReference type="GO" id="GO:0003735">
    <property type="term" value="F:structural constituent of ribosome"/>
    <property type="evidence" value="ECO:0007669"/>
    <property type="project" value="InterPro"/>
</dbReference>
<dbReference type="GO" id="GO:0006412">
    <property type="term" value="P:translation"/>
    <property type="evidence" value="ECO:0007669"/>
    <property type="project" value="UniProtKB-UniRule"/>
</dbReference>
<dbReference type="FunFam" id="3.30.230.10:FF:000001">
    <property type="entry name" value="30S ribosomal protein S9"/>
    <property type="match status" value="1"/>
</dbReference>
<dbReference type="Gene3D" id="3.30.230.10">
    <property type="match status" value="1"/>
</dbReference>
<dbReference type="HAMAP" id="MF_00532_B">
    <property type="entry name" value="Ribosomal_uS9_B"/>
    <property type="match status" value="1"/>
</dbReference>
<dbReference type="InterPro" id="IPR020568">
    <property type="entry name" value="Ribosomal_Su5_D2-typ_SF"/>
</dbReference>
<dbReference type="InterPro" id="IPR000754">
    <property type="entry name" value="Ribosomal_uS9"/>
</dbReference>
<dbReference type="InterPro" id="IPR023035">
    <property type="entry name" value="Ribosomal_uS9_bac/plastid"/>
</dbReference>
<dbReference type="InterPro" id="IPR020574">
    <property type="entry name" value="Ribosomal_uS9_CS"/>
</dbReference>
<dbReference type="InterPro" id="IPR014721">
    <property type="entry name" value="Ribsml_uS5_D2-typ_fold_subgr"/>
</dbReference>
<dbReference type="NCBIfam" id="NF001099">
    <property type="entry name" value="PRK00132.1"/>
    <property type="match status" value="1"/>
</dbReference>
<dbReference type="PANTHER" id="PTHR21569">
    <property type="entry name" value="RIBOSOMAL PROTEIN S9"/>
    <property type="match status" value="1"/>
</dbReference>
<dbReference type="PANTHER" id="PTHR21569:SF1">
    <property type="entry name" value="SMALL RIBOSOMAL SUBUNIT PROTEIN US9M"/>
    <property type="match status" value="1"/>
</dbReference>
<dbReference type="Pfam" id="PF00380">
    <property type="entry name" value="Ribosomal_S9"/>
    <property type="match status" value="1"/>
</dbReference>
<dbReference type="SUPFAM" id="SSF54211">
    <property type="entry name" value="Ribosomal protein S5 domain 2-like"/>
    <property type="match status" value="1"/>
</dbReference>
<dbReference type="PROSITE" id="PS00360">
    <property type="entry name" value="RIBOSOMAL_S9"/>
    <property type="match status" value="1"/>
</dbReference>
<organism>
    <name type="scientific">Clostridium novyi (strain NT)</name>
    <dbReference type="NCBI Taxonomy" id="386415"/>
    <lineage>
        <taxon>Bacteria</taxon>
        <taxon>Bacillati</taxon>
        <taxon>Bacillota</taxon>
        <taxon>Clostridia</taxon>
        <taxon>Eubacteriales</taxon>
        <taxon>Clostridiaceae</taxon>
        <taxon>Clostridium</taxon>
    </lineage>
</organism>
<gene>
    <name evidence="1" type="primary">rpsI</name>
    <name type="ordered locus">NT01CX_1151</name>
</gene>
<feature type="chain" id="PRO_1000051208" description="Small ribosomal subunit protein uS9">
    <location>
        <begin position="1"/>
        <end position="130"/>
    </location>
</feature>
<feature type="region of interest" description="Disordered" evidence="2">
    <location>
        <begin position="102"/>
        <end position="130"/>
    </location>
</feature>
<feature type="compositionally biased region" description="Basic residues" evidence="2">
    <location>
        <begin position="111"/>
        <end position="130"/>
    </location>
</feature>
<protein>
    <recommendedName>
        <fullName evidence="1">Small ribosomal subunit protein uS9</fullName>
    </recommendedName>
    <alternativeName>
        <fullName evidence="3">30S ribosomal protein S9</fullName>
    </alternativeName>
</protein>
<comment type="similarity">
    <text evidence="1">Belongs to the universal ribosomal protein uS9 family.</text>
</comment>
<name>RS9_CLONN</name>